<dbReference type="GO" id="GO:0005576">
    <property type="term" value="C:extracellular region"/>
    <property type="evidence" value="ECO:0007669"/>
    <property type="project" value="UniProtKB-SubCell"/>
</dbReference>
<dbReference type="GO" id="GO:0016020">
    <property type="term" value="C:membrane"/>
    <property type="evidence" value="ECO:0007669"/>
    <property type="project" value="UniProtKB-KW"/>
</dbReference>
<dbReference type="GO" id="GO:0042151">
    <property type="term" value="C:nematocyst"/>
    <property type="evidence" value="ECO:0007669"/>
    <property type="project" value="UniProtKB-SubCell"/>
</dbReference>
<dbReference type="GO" id="GO:0044218">
    <property type="term" value="C:other organism cell membrane"/>
    <property type="evidence" value="ECO:0007669"/>
    <property type="project" value="UniProtKB-KW"/>
</dbReference>
<dbReference type="GO" id="GO:0031640">
    <property type="term" value="P:killing of cells of another organism"/>
    <property type="evidence" value="ECO:0007669"/>
    <property type="project" value="UniProtKB-KW"/>
</dbReference>
<feature type="chain" id="PRO_0000457166" description="Cytolysin Oshem 2" evidence="1">
    <location>
        <begin position="1"/>
        <end position="31"/>
    </location>
</feature>
<name>CYT2_OLISA</name>
<comment type="function">
    <text evidence="1">Cytolysin that shows weak hemolysis and weak myonecrosis.</text>
</comment>
<comment type="subcellular location">
    <subcellularLocation>
        <location evidence="1">Secreted</location>
    </subcellularLocation>
    <subcellularLocation>
        <location evidence="3">Nematocyst</location>
    </subcellularLocation>
    <subcellularLocation>
        <location evidence="3">Target cell membrane</location>
    </subcellularLocation>
</comment>
<comment type="domain">
    <text evidence="1">Circular dichroism reveals that this peptide presents mainly random coils as its main secondary structure.</text>
</comment>
<comment type="mass spectrometry"/>
<sequence>NNSKAKCGDLAGWSKLTFKSADECTKTGQKS</sequence>
<reference key="1">
    <citation type="journal article" date="2014" name="J. Venom. Anim. Toxins Incl. Trop. Dis.">
        <title>Identification of two novel cytolysins from the hydrozoan Olindias sambaquiensis (Cnidaria).</title>
        <authorList>
            <person name="Haddad V. Jr."/>
            <person name="Zara F."/>
            <person name="Marangoni S."/>
            <person name="Toyama D.O."/>
            <person name="de Souza A.J.F."/>
            <person name="Buzzo de Oliveira S.C."/>
            <person name="Toyama M.H."/>
        </authorList>
    </citation>
    <scope>PROTEIN SEQUENCE</scope>
    <scope>FUNCTION</scope>
    <scope>SUBCELLULAR LOCATION</scope>
    <scope>MASS SPECTROMETRY</scope>
</reference>
<protein>
    <recommendedName>
        <fullName evidence="2">Cytolysin Oshem 2</fullName>
    </recommendedName>
    <alternativeName>
        <fullName>Small basic hemolytic peptide</fullName>
    </alternativeName>
</protein>
<proteinExistence type="evidence at protein level"/>
<keyword id="KW-0204">Cytolysis</keyword>
<keyword id="KW-0903">Direct protein sequencing</keyword>
<keyword id="KW-0472">Membrane</keyword>
<keyword id="KW-0166">Nematocyst</keyword>
<keyword id="KW-0964">Secreted</keyword>
<keyword id="KW-1052">Target cell membrane</keyword>
<keyword id="KW-1053">Target membrane</keyword>
<evidence type="ECO:0000269" key="1">
    <source>
    </source>
</evidence>
<evidence type="ECO:0000303" key="2">
    <source>
    </source>
</evidence>
<evidence type="ECO:0000305" key="3">
    <source>
    </source>
</evidence>
<accession>P0DQW9</accession>
<organism>
    <name type="scientific">Olindias sambaquiensis</name>
    <name type="common">Hydromedusa</name>
    <dbReference type="NCBI Taxonomy" id="497392"/>
    <lineage>
        <taxon>Eukaryota</taxon>
        <taxon>Metazoa</taxon>
        <taxon>Cnidaria</taxon>
        <taxon>Hydrozoa</taxon>
        <taxon>Trachylinae</taxon>
        <taxon>Limnomedusae</taxon>
        <taxon>Olindiidae</taxon>
        <taxon>Olindias</taxon>
    </lineage>
</organism>